<evidence type="ECO:0000255" key="1">
    <source>
        <dbReference type="HAMAP-Rule" id="MF_01304"/>
    </source>
</evidence>
<gene>
    <name evidence="1" type="primary">ybhG</name>
    <name type="ordered locus">c0878</name>
</gene>
<accession>Q8FJN6</accession>
<keyword id="KW-0175">Coiled coil</keyword>
<keyword id="KW-0574">Periplasm</keyword>
<keyword id="KW-1185">Reference proteome</keyword>
<keyword id="KW-0732">Signal</keyword>
<reference key="1">
    <citation type="journal article" date="2002" name="Proc. Natl. Acad. Sci. U.S.A.">
        <title>Extensive mosaic structure revealed by the complete genome sequence of uropathogenic Escherichia coli.</title>
        <authorList>
            <person name="Welch R.A."/>
            <person name="Burland V."/>
            <person name="Plunkett G. III"/>
            <person name="Redford P."/>
            <person name="Roesch P."/>
            <person name="Rasko D."/>
            <person name="Buckles E.L."/>
            <person name="Liou S.-R."/>
            <person name="Boutin A."/>
            <person name="Hackett J."/>
            <person name="Stroud D."/>
            <person name="Mayhew G.F."/>
            <person name="Rose D.J."/>
            <person name="Zhou S."/>
            <person name="Schwartz D.C."/>
            <person name="Perna N.T."/>
            <person name="Mobley H.L.T."/>
            <person name="Donnenberg M.S."/>
            <person name="Blattner F.R."/>
        </authorList>
    </citation>
    <scope>NUCLEOTIDE SEQUENCE [LARGE SCALE GENOMIC DNA]</scope>
    <source>
        <strain>CFT073 / ATCC 700928 / UPEC</strain>
    </source>
</reference>
<name>YBHG_ECOL6</name>
<sequence>MMKKPVVIGLAVVVLAAVVAGGYWWYQSRQDNGLTLYGNVDIRTVNLSFRVGGRVESLAVDEGDAIKAGQVLGELDHKPYEIALMQAKAGVSVAQAQYDLMLAGYRDEEIAQAAAAVKQAQAAYDYAQNFYNRQQGLWKSRTISANDLENARSSRDQAQATLKSAQDKLRQYRSGNREQDIAQAKASLEQAQAQLAQAELNLQDSTLVAPSDGTLLTRAVEPGTVLNEGGTVFTVSLTRPVWVRAYVDERNLDQAQPGRKVLLYTDGRPNKPYHGQIGFVSPTAEFTPKTVETPDLRTDLVYRLRIVVTDADDALRQGMPVTVQFGDEAGHE</sequence>
<organism>
    <name type="scientific">Escherichia coli O6:H1 (strain CFT073 / ATCC 700928 / UPEC)</name>
    <dbReference type="NCBI Taxonomy" id="199310"/>
    <lineage>
        <taxon>Bacteria</taxon>
        <taxon>Pseudomonadati</taxon>
        <taxon>Pseudomonadota</taxon>
        <taxon>Gammaproteobacteria</taxon>
        <taxon>Enterobacterales</taxon>
        <taxon>Enterobacteriaceae</taxon>
        <taxon>Escherichia</taxon>
    </lineage>
</organism>
<dbReference type="EMBL" id="AE014075">
    <property type="protein sequence ID" value="AAN79351.1"/>
    <property type="molecule type" value="Genomic_DNA"/>
</dbReference>
<dbReference type="SMR" id="Q8FJN6"/>
<dbReference type="STRING" id="199310.c0878"/>
<dbReference type="KEGG" id="ecc:c0878"/>
<dbReference type="eggNOG" id="COG0845">
    <property type="taxonomic scope" value="Bacteria"/>
</dbReference>
<dbReference type="HOGENOM" id="CLU_018816_6_3_6"/>
<dbReference type="BioCyc" id="ECOL199310:C0878-MONOMER"/>
<dbReference type="Proteomes" id="UP000001410">
    <property type="component" value="Chromosome"/>
</dbReference>
<dbReference type="GO" id="GO:0042597">
    <property type="term" value="C:periplasmic space"/>
    <property type="evidence" value="ECO:0007669"/>
    <property type="project" value="UniProtKB-SubCell"/>
</dbReference>
<dbReference type="FunFam" id="1.10.287.470:FF:000004">
    <property type="entry name" value="UPF0194 membrane protein YbhG"/>
    <property type="match status" value="1"/>
</dbReference>
<dbReference type="FunFam" id="2.40.50.100:FF:000025">
    <property type="entry name" value="UPF0194 membrane protein YbhG"/>
    <property type="match status" value="1"/>
</dbReference>
<dbReference type="Gene3D" id="2.40.30.170">
    <property type="match status" value="1"/>
</dbReference>
<dbReference type="Gene3D" id="2.40.50.100">
    <property type="match status" value="2"/>
</dbReference>
<dbReference type="Gene3D" id="1.10.287.470">
    <property type="entry name" value="Helix hairpin bin"/>
    <property type="match status" value="2"/>
</dbReference>
<dbReference type="HAMAP" id="MF_01304">
    <property type="entry name" value="UPF0194"/>
    <property type="match status" value="1"/>
</dbReference>
<dbReference type="InterPro" id="IPR032317">
    <property type="entry name" value="CusB_D23"/>
</dbReference>
<dbReference type="InterPro" id="IPR022936">
    <property type="entry name" value="UPF0194_membrane_YbhG"/>
</dbReference>
<dbReference type="InterPro" id="IPR050465">
    <property type="entry name" value="UPF0194_transport"/>
</dbReference>
<dbReference type="NCBIfam" id="NF002939">
    <property type="entry name" value="PRK03598.1"/>
    <property type="match status" value="1"/>
</dbReference>
<dbReference type="PANTHER" id="PTHR32347">
    <property type="entry name" value="EFFLUX SYSTEM COMPONENT YKNX-RELATED"/>
    <property type="match status" value="1"/>
</dbReference>
<dbReference type="PANTHER" id="PTHR32347:SF29">
    <property type="entry name" value="UPF0194 MEMBRANE PROTEIN YBHG"/>
    <property type="match status" value="1"/>
</dbReference>
<dbReference type="Pfam" id="PF16576">
    <property type="entry name" value="HlyD_D23"/>
    <property type="match status" value="1"/>
</dbReference>
<dbReference type="SUPFAM" id="SSF111369">
    <property type="entry name" value="HlyD-like secretion proteins"/>
    <property type="match status" value="2"/>
</dbReference>
<dbReference type="SUPFAM" id="SSF56954">
    <property type="entry name" value="Outer membrane efflux proteins (OEP)"/>
    <property type="match status" value="1"/>
</dbReference>
<protein>
    <recommendedName>
        <fullName evidence="1">UPF0194 membrane protein YbhG</fullName>
    </recommendedName>
</protein>
<comment type="subcellular location">
    <subcellularLocation>
        <location evidence="1">Periplasm</location>
    </subcellularLocation>
</comment>
<comment type="similarity">
    <text evidence="1">Belongs to the UPF0194 family.</text>
</comment>
<feature type="signal peptide" evidence="1">
    <location>
        <begin position="1"/>
        <end position="16"/>
    </location>
</feature>
<feature type="chain" id="PRO_0000088747" description="UPF0194 membrane protein YbhG">
    <location>
        <begin position="17"/>
        <end position="332"/>
    </location>
</feature>
<feature type="coiled-coil region" evidence="1">
    <location>
        <begin position="108"/>
        <end position="211"/>
    </location>
</feature>
<proteinExistence type="inferred from homology"/>